<organism>
    <name type="scientific">Porphyromonas gingivalis (strain ATCC 33277 / DSM 20709 / CIP 103683 / JCM 12257 / NCTC 11834 / 2561)</name>
    <dbReference type="NCBI Taxonomy" id="431947"/>
    <lineage>
        <taxon>Bacteria</taxon>
        <taxon>Pseudomonadati</taxon>
        <taxon>Bacteroidota</taxon>
        <taxon>Bacteroidia</taxon>
        <taxon>Bacteroidales</taxon>
        <taxon>Porphyromonadaceae</taxon>
        <taxon>Porphyromonas</taxon>
    </lineage>
</organism>
<proteinExistence type="inferred from homology"/>
<protein>
    <recommendedName>
        <fullName evidence="1">Lysine--tRNA ligase</fullName>
        <ecNumber evidence="1">6.1.1.6</ecNumber>
    </recommendedName>
    <alternativeName>
        <fullName evidence="1">Lysyl-tRNA synthetase</fullName>
        <shortName evidence="1">LysRS</shortName>
    </alternativeName>
</protein>
<name>SYK_PORG3</name>
<evidence type="ECO:0000255" key="1">
    <source>
        <dbReference type="HAMAP-Rule" id="MF_00252"/>
    </source>
</evidence>
<comment type="catalytic activity">
    <reaction evidence="1">
        <text>tRNA(Lys) + L-lysine + ATP = L-lysyl-tRNA(Lys) + AMP + diphosphate</text>
        <dbReference type="Rhea" id="RHEA:20792"/>
        <dbReference type="Rhea" id="RHEA-COMP:9696"/>
        <dbReference type="Rhea" id="RHEA-COMP:9697"/>
        <dbReference type="ChEBI" id="CHEBI:30616"/>
        <dbReference type="ChEBI" id="CHEBI:32551"/>
        <dbReference type="ChEBI" id="CHEBI:33019"/>
        <dbReference type="ChEBI" id="CHEBI:78442"/>
        <dbReference type="ChEBI" id="CHEBI:78529"/>
        <dbReference type="ChEBI" id="CHEBI:456215"/>
        <dbReference type="EC" id="6.1.1.6"/>
    </reaction>
</comment>
<comment type="cofactor">
    <cofactor evidence="1">
        <name>Mg(2+)</name>
        <dbReference type="ChEBI" id="CHEBI:18420"/>
    </cofactor>
    <text evidence="1">Binds 3 Mg(2+) ions per subunit.</text>
</comment>
<comment type="subunit">
    <text evidence="1">Homodimer.</text>
</comment>
<comment type="subcellular location">
    <subcellularLocation>
        <location evidence="1">Cytoplasm</location>
    </subcellularLocation>
</comment>
<comment type="similarity">
    <text evidence="1">Belongs to the class-II aminoacyl-tRNA synthetase family.</text>
</comment>
<dbReference type="EC" id="6.1.1.6" evidence="1"/>
<dbReference type="EMBL" id="AP009380">
    <property type="protein sequence ID" value="BAG33676.1"/>
    <property type="molecule type" value="Genomic_DNA"/>
</dbReference>
<dbReference type="RefSeq" id="WP_012458069.1">
    <property type="nucleotide sequence ID" value="NC_010729.1"/>
</dbReference>
<dbReference type="SMR" id="B2RJY1"/>
<dbReference type="GeneID" id="29256363"/>
<dbReference type="KEGG" id="pgn:PGN_1157"/>
<dbReference type="eggNOG" id="COG1190">
    <property type="taxonomic scope" value="Bacteria"/>
</dbReference>
<dbReference type="HOGENOM" id="CLU_008255_6_0_10"/>
<dbReference type="OrthoDB" id="9801152at2"/>
<dbReference type="BioCyc" id="PGIN431947:G1G2V-1323-MONOMER"/>
<dbReference type="Proteomes" id="UP000008842">
    <property type="component" value="Chromosome"/>
</dbReference>
<dbReference type="GO" id="GO:0005829">
    <property type="term" value="C:cytosol"/>
    <property type="evidence" value="ECO:0007669"/>
    <property type="project" value="TreeGrafter"/>
</dbReference>
<dbReference type="GO" id="GO:0005524">
    <property type="term" value="F:ATP binding"/>
    <property type="evidence" value="ECO:0007669"/>
    <property type="project" value="UniProtKB-UniRule"/>
</dbReference>
<dbReference type="GO" id="GO:0004824">
    <property type="term" value="F:lysine-tRNA ligase activity"/>
    <property type="evidence" value="ECO:0007669"/>
    <property type="project" value="UniProtKB-UniRule"/>
</dbReference>
<dbReference type="GO" id="GO:0000287">
    <property type="term" value="F:magnesium ion binding"/>
    <property type="evidence" value="ECO:0007669"/>
    <property type="project" value="UniProtKB-UniRule"/>
</dbReference>
<dbReference type="GO" id="GO:0000049">
    <property type="term" value="F:tRNA binding"/>
    <property type="evidence" value="ECO:0007669"/>
    <property type="project" value="TreeGrafter"/>
</dbReference>
<dbReference type="GO" id="GO:0006430">
    <property type="term" value="P:lysyl-tRNA aminoacylation"/>
    <property type="evidence" value="ECO:0007669"/>
    <property type="project" value="UniProtKB-UniRule"/>
</dbReference>
<dbReference type="CDD" id="cd00775">
    <property type="entry name" value="LysRS_core"/>
    <property type="match status" value="1"/>
</dbReference>
<dbReference type="CDD" id="cd04322">
    <property type="entry name" value="LysRS_N"/>
    <property type="match status" value="1"/>
</dbReference>
<dbReference type="FunFam" id="2.40.50.140:FF:000024">
    <property type="entry name" value="Lysine--tRNA ligase"/>
    <property type="match status" value="1"/>
</dbReference>
<dbReference type="FunFam" id="3.30.930.10:FF:000238">
    <property type="entry name" value="Lysine--tRNA ligase"/>
    <property type="match status" value="1"/>
</dbReference>
<dbReference type="Gene3D" id="3.30.930.10">
    <property type="entry name" value="Bira Bifunctional Protein, Domain 2"/>
    <property type="match status" value="1"/>
</dbReference>
<dbReference type="Gene3D" id="2.40.50.140">
    <property type="entry name" value="Nucleic acid-binding proteins"/>
    <property type="match status" value="1"/>
</dbReference>
<dbReference type="HAMAP" id="MF_00252">
    <property type="entry name" value="Lys_tRNA_synth_class2"/>
    <property type="match status" value="1"/>
</dbReference>
<dbReference type="InterPro" id="IPR004364">
    <property type="entry name" value="Aa-tRNA-synt_II"/>
</dbReference>
<dbReference type="InterPro" id="IPR006195">
    <property type="entry name" value="aa-tRNA-synth_II"/>
</dbReference>
<dbReference type="InterPro" id="IPR045864">
    <property type="entry name" value="aa-tRNA-synth_II/BPL/LPL"/>
</dbReference>
<dbReference type="InterPro" id="IPR002313">
    <property type="entry name" value="Lys-tRNA-ligase_II"/>
</dbReference>
<dbReference type="InterPro" id="IPR044136">
    <property type="entry name" value="Lys-tRNA-ligase_II_N"/>
</dbReference>
<dbReference type="InterPro" id="IPR018149">
    <property type="entry name" value="Lys-tRNA-synth_II_C"/>
</dbReference>
<dbReference type="InterPro" id="IPR012340">
    <property type="entry name" value="NA-bd_OB-fold"/>
</dbReference>
<dbReference type="InterPro" id="IPR004365">
    <property type="entry name" value="NA-bd_OB_tRNA"/>
</dbReference>
<dbReference type="NCBIfam" id="TIGR00499">
    <property type="entry name" value="lysS_bact"/>
    <property type="match status" value="1"/>
</dbReference>
<dbReference type="NCBIfam" id="NF001756">
    <property type="entry name" value="PRK00484.1"/>
    <property type="match status" value="1"/>
</dbReference>
<dbReference type="PANTHER" id="PTHR42918:SF15">
    <property type="entry name" value="LYSINE--TRNA LIGASE, CHLOROPLASTIC_MITOCHONDRIAL"/>
    <property type="match status" value="1"/>
</dbReference>
<dbReference type="PANTHER" id="PTHR42918">
    <property type="entry name" value="LYSYL-TRNA SYNTHETASE"/>
    <property type="match status" value="1"/>
</dbReference>
<dbReference type="Pfam" id="PF00152">
    <property type="entry name" value="tRNA-synt_2"/>
    <property type="match status" value="1"/>
</dbReference>
<dbReference type="Pfam" id="PF01336">
    <property type="entry name" value="tRNA_anti-codon"/>
    <property type="match status" value="1"/>
</dbReference>
<dbReference type="PRINTS" id="PR00982">
    <property type="entry name" value="TRNASYNTHLYS"/>
</dbReference>
<dbReference type="SUPFAM" id="SSF55681">
    <property type="entry name" value="Class II aaRS and biotin synthetases"/>
    <property type="match status" value="1"/>
</dbReference>
<dbReference type="SUPFAM" id="SSF50249">
    <property type="entry name" value="Nucleic acid-binding proteins"/>
    <property type="match status" value="1"/>
</dbReference>
<dbReference type="PROSITE" id="PS50862">
    <property type="entry name" value="AA_TRNA_LIGASE_II"/>
    <property type="match status" value="1"/>
</dbReference>
<gene>
    <name evidence="1" type="primary">lysS</name>
    <name type="ordered locus">PGN_1157</name>
</gene>
<keyword id="KW-0030">Aminoacyl-tRNA synthetase</keyword>
<keyword id="KW-0067">ATP-binding</keyword>
<keyword id="KW-0963">Cytoplasm</keyword>
<keyword id="KW-0436">Ligase</keyword>
<keyword id="KW-0460">Magnesium</keyword>
<keyword id="KW-0479">Metal-binding</keyword>
<keyword id="KW-0547">Nucleotide-binding</keyword>
<keyword id="KW-0648">Protein biosynthesis</keyword>
<feature type="chain" id="PRO_1000101133" description="Lysine--tRNA ligase">
    <location>
        <begin position="1"/>
        <end position="578"/>
    </location>
</feature>
<feature type="binding site" evidence="1">
    <location>
        <position position="414"/>
    </location>
    <ligand>
        <name>Mg(2+)</name>
        <dbReference type="ChEBI" id="CHEBI:18420"/>
        <label>1</label>
    </ligand>
</feature>
<feature type="binding site" evidence="1">
    <location>
        <position position="421"/>
    </location>
    <ligand>
        <name>Mg(2+)</name>
        <dbReference type="ChEBI" id="CHEBI:18420"/>
        <label>1</label>
    </ligand>
</feature>
<feature type="binding site" evidence="1">
    <location>
        <position position="421"/>
    </location>
    <ligand>
        <name>Mg(2+)</name>
        <dbReference type="ChEBI" id="CHEBI:18420"/>
        <label>2</label>
    </ligand>
</feature>
<reference key="1">
    <citation type="journal article" date="2008" name="DNA Res.">
        <title>Determination of the genome sequence of Porphyromonas gingivalis strain ATCC 33277 and genomic comparison with strain W83 revealed extensive genome rearrangements in P. gingivalis.</title>
        <authorList>
            <person name="Naito M."/>
            <person name="Hirakawa H."/>
            <person name="Yamashita A."/>
            <person name="Ohara N."/>
            <person name="Shoji M."/>
            <person name="Yukitake H."/>
            <person name="Nakayama K."/>
            <person name="Toh H."/>
            <person name="Yoshimura F."/>
            <person name="Kuhara S."/>
            <person name="Hattori M."/>
            <person name="Hayashi T."/>
            <person name="Nakayama K."/>
        </authorList>
    </citation>
    <scope>NUCLEOTIDE SEQUENCE [LARGE SCALE GENOMIC DNA]</scope>
    <source>
        <strain>ATCC 33277 / DSM 20709 / CIP 103683 / JCM 12257 / NCTC 11834 / 2561</strain>
    </source>
</reference>
<sequence>MNILELSEQEVVRRNSLEQLRNLGIDPYPAAEYTVNAYSTEIKRNFNGDENAAKRQVSIAGRIMSRRIMGKATFMELQDAEGRIQIYITRDDICPGEDKEFYNTVVKKCTDIGDFIGVKGYVFRTQMGEISVHVQEMTFLSKAIRPLPVVKEKDGEVFDGFTDSEQRYRQRYVDLVVNSHVKDIFLKRTMVFNSMRSFFNERGYIEVDTPVLQSIPGGAAARPFITHHNALDIPLYLRIANELYLKRLIVGGFDGVYEFSRNFRNEGMDRTHNPEFTAMEIYVAYKDYNWMMNFTEQMLERICMDVLGTTQVKVGEKLIDFKAPYRRVTMIEAIHEHTGIDISGMNEAELRQVCDKLGVEHNETMGKGKLIDEIFGEKCEKNYIQPTFITDYPKEMSPLTKEHRTNPELTERFELMVNGKELANAYSELNDPIDQRERFEEQLKLSEKGDDEAMYIDNDFIRALEYGMPPTSGMGIGMDRLVMLLTGQESIQEVLLFPQMKPEKVAPRDTKEKFAVCGIPEEWVPVLHKAGYLTVQSMREDKPGKVMQQLMDINKKYKLGLAGLNLETVSAWQEAPYE</sequence>
<accession>B2RJY1</accession>